<sequence length="295" mass="30468">MTATIIDGKIISAELRARVAAEVTRIKADHGITPGLAVVLVGSDPASEVYVRSKHKQTQEAGMASFEHRLPADVPQAELLALIGQLNADPAVHGILVQLPLPKGLDSNAVIDAIDPAKDVDGLNPVNAGRLASGLFALTPCTPLGCIIMAKQVHASLEGMNAIVIGRSNLVGKPLVQLLLNENATVTIAHSRSRDLPALCRQADLVFAAVGRPEMVKGDWIKPGATVIDVGINRTPSPDGGKDKLVGDVAFAEAKDIAGAITPVPGGVGLMTVACLLVNTVRAASAIHGLPKPAV</sequence>
<protein>
    <recommendedName>
        <fullName evidence="1">Bifunctional protein FolD</fullName>
    </recommendedName>
    <domain>
        <recommendedName>
            <fullName evidence="1">Methylenetetrahydrofolate dehydrogenase</fullName>
            <ecNumber evidence="1">1.5.1.5</ecNumber>
        </recommendedName>
    </domain>
    <domain>
        <recommendedName>
            <fullName evidence="1">Methenyltetrahydrofolate cyclohydrolase</fullName>
            <ecNumber evidence="1">3.5.4.9</ecNumber>
        </recommendedName>
    </domain>
</protein>
<evidence type="ECO:0000255" key="1">
    <source>
        <dbReference type="HAMAP-Rule" id="MF_01576"/>
    </source>
</evidence>
<proteinExistence type="inferred from homology"/>
<accession>Q2J3Z0</accession>
<reference key="1">
    <citation type="submission" date="2006-01" db="EMBL/GenBank/DDBJ databases">
        <title>Complete sequence of Rhodopseudomonas palustris HaA2.</title>
        <authorList>
            <consortium name="US DOE Joint Genome Institute"/>
            <person name="Copeland A."/>
            <person name="Lucas S."/>
            <person name="Lapidus A."/>
            <person name="Barry K."/>
            <person name="Detter J.C."/>
            <person name="Glavina T."/>
            <person name="Hammon N."/>
            <person name="Israni S."/>
            <person name="Pitluck S."/>
            <person name="Chain P."/>
            <person name="Malfatti S."/>
            <person name="Shin M."/>
            <person name="Vergez L."/>
            <person name="Schmutz J."/>
            <person name="Larimer F."/>
            <person name="Land M."/>
            <person name="Hauser L."/>
            <person name="Pelletier D.A."/>
            <person name="Kyrpides N."/>
            <person name="Anderson I."/>
            <person name="Oda Y."/>
            <person name="Harwood C.S."/>
            <person name="Richardson P."/>
        </authorList>
    </citation>
    <scope>NUCLEOTIDE SEQUENCE [LARGE SCALE GENOMIC DNA]</scope>
    <source>
        <strain>HaA2</strain>
    </source>
</reference>
<organism>
    <name type="scientific">Rhodopseudomonas palustris (strain HaA2)</name>
    <dbReference type="NCBI Taxonomy" id="316058"/>
    <lineage>
        <taxon>Bacteria</taxon>
        <taxon>Pseudomonadati</taxon>
        <taxon>Pseudomonadota</taxon>
        <taxon>Alphaproteobacteria</taxon>
        <taxon>Hyphomicrobiales</taxon>
        <taxon>Nitrobacteraceae</taxon>
        <taxon>Rhodopseudomonas</taxon>
    </lineage>
</organism>
<gene>
    <name evidence="1" type="primary">folD</name>
    <name type="ordered locus">RPB_0108</name>
</gene>
<dbReference type="EC" id="1.5.1.5" evidence="1"/>
<dbReference type="EC" id="3.5.4.9" evidence="1"/>
<dbReference type="EMBL" id="CP000250">
    <property type="protein sequence ID" value="ABD04820.1"/>
    <property type="molecule type" value="Genomic_DNA"/>
</dbReference>
<dbReference type="RefSeq" id="WP_011439010.1">
    <property type="nucleotide sequence ID" value="NC_007778.1"/>
</dbReference>
<dbReference type="SMR" id="Q2J3Z0"/>
<dbReference type="STRING" id="316058.RPB_0108"/>
<dbReference type="KEGG" id="rpb:RPB_0108"/>
<dbReference type="eggNOG" id="COG0190">
    <property type="taxonomic scope" value="Bacteria"/>
</dbReference>
<dbReference type="HOGENOM" id="CLU_034045_2_1_5"/>
<dbReference type="OrthoDB" id="9803580at2"/>
<dbReference type="UniPathway" id="UPA00193"/>
<dbReference type="Proteomes" id="UP000008809">
    <property type="component" value="Chromosome"/>
</dbReference>
<dbReference type="GO" id="GO:0005829">
    <property type="term" value="C:cytosol"/>
    <property type="evidence" value="ECO:0007669"/>
    <property type="project" value="TreeGrafter"/>
</dbReference>
<dbReference type="GO" id="GO:0004477">
    <property type="term" value="F:methenyltetrahydrofolate cyclohydrolase activity"/>
    <property type="evidence" value="ECO:0007669"/>
    <property type="project" value="UniProtKB-UniRule"/>
</dbReference>
<dbReference type="GO" id="GO:0004488">
    <property type="term" value="F:methylenetetrahydrofolate dehydrogenase (NADP+) activity"/>
    <property type="evidence" value="ECO:0007669"/>
    <property type="project" value="UniProtKB-UniRule"/>
</dbReference>
<dbReference type="GO" id="GO:0000105">
    <property type="term" value="P:L-histidine biosynthetic process"/>
    <property type="evidence" value="ECO:0007669"/>
    <property type="project" value="UniProtKB-KW"/>
</dbReference>
<dbReference type="GO" id="GO:0009086">
    <property type="term" value="P:methionine biosynthetic process"/>
    <property type="evidence" value="ECO:0007669"/>
    <property type="project" value="UniProtKB-KW"/>
</dbReference>
<dbReference type="GO" id="GO:0006164">
    <property type="term" value="P:purine nucleotide biosynthetic process"/>
    <property type="evidence" value="ECO:0007669"/>
    <property type="project" value="UniProtKB-KW"/>
</dbReference>
<dbReference type="GO" id="GO:0035999">
    <property type="term" value="P:tetrahydrofolate interconversion"/>
    <property type="evidence" value="ECO:0007669"/>
    <property type="project" value="UniProtKB-UniRule"/>
</dbReference>
<dbReference type="CDD" id="cd01080">
    <property type="entry name" value="NAD_bind_m-THF_DH_Cyclohyd"/>
    <property type="match status" value="1"/>
</dbReference>
<dbReference type="FunFam" id="3.40.50.720:FF:000006">
    <property type="entry name" value="Bifunctional protein FolD"/>
    <property type="match status" value="1"/>
</dbReference>
<dbReference type="FunFam" id="3.40.50.10860:FF:000005">
    <property type="entry name" value="C-1-tetrahydrofolate synthase, cytoplasmic, putative"/>
    <property type="match status" value="1"/>
</dbReference>
<dbReference type="Gene3D" id="3.40.50.10860">
    <property type="entry name" value="Leucine Dehydrogenase, chain A, domain 1"/>
    <property type="match status" value="1"/>
</dbReference>
<dbReference type="Gene3D" id="3.40.50.720">
    <property type="entry name" value="NAD(P)-binding Rossmann-like Domain"/>
    <property type="match status" value="1"/>
</dbReference>
<dbReference type="HAMAP" id="MF_01576">
    <property type="entry name" value="THF_DHG_CYH"/>
    <property type="match status" value="1"/>
</dbReference>
<dbReference type="InterPro" id="IPR046346">
    <property type="entry name" value="Aminoacid_DH-like_N_sf"/>
</dbReference>
<dbReference type="InterPro" id="IPR036291">
    <property type="entry name" value="NAD(P)-bd_dom_sf"/>
</dbReference>
<dbReference type="InterPro" id="IPR000672">
    <property type="entry name" value="THF_DH/CycHdrlase"/>
</dbReference>
<dbReference type="InterPro" id="IPR020630">
    <property type="entry name" value="THF_DH/CycHdrlase_cat_dom"/>
</dbReference>
<dbReference type="InterPro" id="IPR020867">
    <property type="entry name" value="THF_DH/CycHdrlase_CS"/>
</dbReference>
<dbReference type="InterPro" id="IPR020631">
    <property type="entry name" value="THF_DH/CycHdrlase_NAD-bd_dom"/>
</dbReference>
<dbReference type="NCBIfam" id="NF010783">
    <property type="entry name" value="PRK14186.1"/>
    <property type="match status" value="1"/>
</dbReference>
<dbReference type="NCBIfam" id="NF010785">
    <property type="entry name" value="PRK14188.1"/>
    <property type="match status" value="1"/>
</dbReference>
<dbReference type="PANTHER" id="PTHR48099:SF5">
    <property type="entry name" value="C-1-TETRAHYDROFOLATE SYNTHASE, CYTOPLASMIC"/>
    <property type="match status" value="1"/>
</dbReference>
<dbReference type="PANTHER" id="PTHR48099">
    <property type="entry name" value="C-1-TETRAHYDROFOLATE SYNTHASE, CYTOPLASMIC-RELATED"/>
    <property type="match status" value="1"/>
</dbReference>
<dbReference type="Pfam" id="PF00763">
    <property type="entry name" value="THF_DHG_CYH"/>
    <property type="match status" value="1"/>
</dbReference>
<dbReference type="Pfam" id="PF02882">
    <property type="entry name" value="THF_DHG_CYH_C"/>
    <property type="match status" value="1"/>
</dbReference>
<dbReference type="PRINTS" id="PR00085">
    <property type="entry name" value="THFDHDRGNASE"/>
</dbReference>
<dbReference type="SUPFAM" id="SSF53223">
    <property type="entry name" value="Aminoacid dehydrogenase-like, N-terminal domain"/>
    <property type="match status" value="1"/>
</dbReference>
<dbReference type="SUPFAM" id="SSF51735">
    <property type="entry name" value="NAD(P)-binding Rossmann-fold domains"/>
    <property type="match status" value="1"/>
</dbReference>
<dbReference type="PROSITE" id="PS00766">
    <property type="entry name" value="THF_DHG_CYH_1"/>
    <property type="match status" value="1"/>
</dbReference>
<keyword id="KW-0028">Amino-acid biosynthesis</keyword>
<keyword id="KW-0368">Histidine biosynthesis</keyword>
<keyword id="KW-0378">Hydrolase</keyword>
<keyword id="KW-0486">Methionine biosynthesis</keyword>
<keyword id="KW-0511">Multifunctional enzyme</keyword>
<keyword id="KW-0521">NADP</keyword>
<keyword id="KW-0554">One-carbon metabolism</keyword>
<keyword id="KW-0560">Oxidoreductase</keyword>
<keyword id="KW-0658">Purine biosynthesis</keyword>
<keyword id="KW-1185">Reference proteome</keyword>
<name>FOLD_RHOP2</name>
<feature type="chain" id="PRO_0000268477" description="Bifunctional protein FolD">
    <location>
        <begin position="1"/>
        <end position="295"/>
    </location>
</feature>
<feature type="binding site" evidence="1">
    <location>
        <begin position="166"/>
        <end position="168"/>
    </location>
    <ligand>
        <name>NADP(+)</name>
        <dbReference type="ChEBI" id="CHEBI:58349"/>
    </ligand>
</feature>
<feature type="binding site" evidence="1">
    <location>
        <position position="191"/>
    </location>
    <ligand>
        <name>NADP(+)</name>
        <dbReference type="ChEBI" id="CHEBI:58349"/>
    </ligand>
</feature>
<feature type="binding site" evidence="1">
    <location>
        <position position="232"/>
    </location>
    <ligand>
        <name>NADP(+)</name>
        <dbReference type="ChEBI" id="CHEBI:58349"/>
    </ligand>
</feature>
<comment type="function">
    <text evidence="1">Catalyzes the oxidation of 5,10-methylenetetrahydrofolate to 5,10-methenyltetrahydrofolate and then the hydrolysis of 5,10-methenyltetrahydrofolate to 10-formyltetrahydrofolate.</text>
</comment>
<comment type="catalytic activity">
    <reaction evidence="1">
        <text>(6R)-5,10-methylene-5,6,7,8-tetrahydrofolate + NADP(+) = (6R)-5,10-methenyltetrahydrofolate + NADPH</text>
        <dbReference type="Rhea" id="RHEA:22812"/>
        <dbReference type="ChEBI" id="CHEBI:15636"/>
        <dbReference type="ChEBI" id="CHEBI:57455"/>
        <dbReference type="ChEBI" id="CHEBI:57783"/>
        <dbReference type="ChEBI" id="CHEBI:58349"/>
        <dbReference type="EC" id="1.5.1.5"/>
    </reaction>
</comment>
<comment type="catalytic activity">
    <reaction evidence="1">
        <text>(6R)-5,10-methenyltetrahydrofolate + H2O = (6R)-10-formyltetrahydrofolate + H(+)</text>
        <dbReference type="Rhea" id="RHEA:23700"/>
        <dbReference type="ChEBI" id="CHEBI:15377"/>
        <dbReference type="ChEBI" id="CHEBI:15378"/>
        <dbReference type="ChEBI" id="CHEBI:57455"/>
        <dbReference type="ChEBI" id="CHEBI:195366"/>
        <dbReference type="EC" id="3.5.4.9"/>
    </reaction>
</comment>
<comment type="pathway">
    <text evidence="1">One-carbon metabolism; tetrahydrofolate interconversion.</text>
</comment>
<comment type="subunit">
    <text evidence="1">Homodimer.</text>
</comment>
<comment type="similarity">
    <text evidence="1">Belongs to the tetrahydrofolate dehydrogenase/cyclohydrolase family.</text>
</comment>